<protein>
    <recommendedName>
        <fullName evidence="1">33 kDa chaperonin</fullName>
    </recommendedName>
    <alternativeName>
        <fullName evidence="1">Heat shock protein 33 homolog</fullName>
        <shortName evidence="1">HSP33</shortName>
    </alternativeName>
</protein>
<proteinExistence type="inferred from homology"/>
<feature type="chain" id="PRO_1000076077" description="33 kDa chaperonin">
    <location>
        <begin position="1"/>
        <end position="299"/>
    </location>
</feature>
<feature type="disulfide bond" description="Redox-active" evidence="1">
    <location>
        <begin position="239"/>
        <end position="241"/>
    </location>
</feature>
<feature type="disulfide bond" description="Redox-active" evidence="1">
    <location>
        <begin position="272"/>
        <end position="275"/>
    </location>
</feature>
<accession>B0C4Q9</accession>
<reference key="1">
    <citation type="journal article" date="2008" name="Proc. Natl. Acad. Sci. U.S.A.">
        <title>Niche adaptation and genome expansion in the chlorophyll d-producing cyanobacterium Acaryochloris marina.</title>
        <authorList>
            <person name="Swingley W.D."/>
            <person name="Chen M."/>
            <person name="Cheung P.C."/>
            <person name="Conrad A.L."/>
            <person name="Dejesa L.C."/>
            <person name="Hao J."/>
            <person name="Honchak B.M."/>
            <person name="Karbach L.E."/>
            <person name="Kurdoglu A."/>
            <person name="Lahiri S."/>
            <person name="Mastrian S.D."/>
            <person name="Miyashita H."/>
            <person name="Page L."/>
            <person name="Ramakrishna P."/>
            <person name="Satoh S."/>
            <person name="Sattley W.M."/>
            <person name="Shimada Y."/>
            <person name="Taylor H.L."/>
            <person name="Tomo T."/>
            <person name="Tsuchiya T."/>
            <person name="Wang Z.T."/>
            <person name="Raymond J."/>
            <person name="Mimuro M."/>
            <person name="Blankenship R.E."/>
            <person name="Touchman J.W."/>
        </authorList>
    </citation>
    <scope>NUCLEOTIDE SEQUENCE [LARGE SCALE GENOMIC DNA]</scope>
    <source>
        <strain>MBIC 11017</strain>
    </source>
</reference>
<name>HSLO_ACAM1</name>
<dbReference type="EMBL" id="CP000828">
    <property type="protein sequence ID" value="ABW29942.1"/>
    <property type="molecule type" value="Genomic_DNA"/>
</dbReference>
<dbReference type="RefSeq" id="WP_012165215.1">
    <property type="nucleotide sequence ID" value="NC_009925.1"/>
</dbReference>
<dbReference type="SMR" id="B0C4Q9"/>
<dbReference type="STRING" id="329726.AM1_4974"/>
<dbReference type="KEGG" id="amr:AM1_4974"/>
<dbReference type="eggNOG" id="COG1281">
    <property type="taxonomic scope" value="Bacteria"/>
</dbReference>
<dbReference type="HOGENOM" id="CLU_054493_1_0_3"/>
<dbReference type="OrthoDB" id="9776534at2"/>
<dbReference type="Proteomes" id="UP000000268">
    <property type="component" value="Chromosome"/>
</dbReference>
<dbReference type="GO" id="GO:0005737">
    <property type="term" value="C:cytoplasm"/>
    <property type="evidence" value="ECO:0007669"/>
    <property type="project" value="UniProtKB-SubCell"/>
</dbReference>
<dbReference type="GO" id="GO:0044183">
    <property type="term" value="F:protein folding chaperone"/>
    <property type="evidence" value="ECO:0007669"/>
    <property type="project" value="TreeGrafter"/>
</dbReference>
<dbReference type="GO" id="GO:0051082">
    <property type="term" value="F:unfolded protein binding"/>
    <property type="evidence" value="ECO:0007669"/>
    <property type="project" value="UniProtKB-UniRule"/>
</dbReference>
<dbReference type="GO" id="GO:0042026">
    <property type="term" value="P:protein refolding"/>
    <property type="evidence" value="ECO:0007669"/>
    <property type="project" value="TreeGrafter"/>
</dbReference>
<dbReference type="CDD" id="cd00498">
    <property type="entry name" value="Hsp33"/>
    <property type="match status" value="1"/>
</dbReference>
<dbReference type="Gene3D" id="3.55.30.10">
    <property type="entry name" value="Hsp33 domain"/>
    <property type="match status" value="1"/>
</dbReference>
<dbReference type="Gene3D" id="3.90.1280.10">
    <property type="entry name" value="HSP33 redox switch-like"/>
    <property type="match status" value="1"/>
</dbReference>
<dbReference type="HAMAP" id="MF_00117">
    <property type="entry name" value="HslO"/>
    <property type="match status" value="1"/>
</dbReference>
<dbReference type="InterPro" id="IPR000397">
    <property type="entry name" value="Heat_shock_Hsp33"/>
</dbReference>
<dbReference type="InterPro" id="IPR016154">
    <property type="entry name" value="Heat_shock_Hsp33_C"/>
</dbReference>
<dbReference type="InterPro" id="IPR016153">
    <property type="entry name" value="Heat_shock_Hsp33_N"/>
</dbReference>
<dbReference type="NCBIfam" id="NF001033">
    <property type="entry name" value="PRK00114.1"/>
    <property type="match status" value="1"/>
</dbReference>
<dbReference type="PANTHER" id="PTHR30111">
    <property type="entry name" value="33 KDA CHAPERONIN"/>
    <property type="match status" value="1"/>
</dbReference>
<dbReference type="PANTHER" id="PTHR30111:SF1">
    <property type="entry name" value="33 KDA CHAPERONIN"/>
    <property type="match status" value="1"/>
</dbReference>
<dbReference type="Pfam" id="PF01430">
    <property type="entry name" value="HSP33"/>
    <property type="match status" value="1"/>
</dbReference>
<dbReference type="PIRSF" id="PIRSF005261">
    <property type="entry name" value="Heat_shock_Hsp33"/>
    <property type="match status" value="1"/>
</dbReference>
<dbReference type="SUPFAM" id="SSF64397">
    <property type="entry name" value="Hsp33 domain"/>
    <property type="match status" value="1"/>
</dbReference>
<dbReference type="SUPFAM" id="SSF118352">
    <property type="entry name" value="HSP33 redox switch-like"/>
    <property type="match status" value="1"/>
</dbReference>
<sequence length="299" mass="31601">MADQLIRATAADDGIRAVGVITTRLTEDARQRHGLSYVATAALGRTMSAGLLLASSMKQAEARINLRIRGDGPLQGILVDAGLDGTVRGYVTNPGVELPPNAKGKLDVGGAVGKGFLYVIRDMGYGYPYSSTVELVSGEIGEDVTHYLVTSEQTPSALALGVFVGAQGVTASGGLLIQVLPKAAEDPALVELLESRLAHLQGFTPLLQAGKTLPDIFTDLLGDMGLKIFPQTQMVQFQCRCSTERVLGALKMLGQDELLDMIEKDDGAEATCDFCGEVYQVTSDQLGKLIDDLKTEAGA</sequence>
<comment type="function">
    <text evidence="1">Redox regulated molecular chaperone. Protects both thermally unfolding and oxidatively damaged proteins from irreversible aggregation. Plays an important role in the bacterial defense system toward oxidative stress.</text>
</comment>
<comment type="subcellular location">
    <subcellularLocation>
        <location evidence="1">Cytoplasm</location>
    </subcellularLocation>
</comment>
<comment type="PTM">
    <text evidence="1">Under oxidizing conditions two disulfide bonds are formed involving the reactive cysteines. Under reducing conditions zinc is bound to the reactive cysteines and the protein is inactive.</text>
</comment>
<comment type="similarity">
    <text evidence="1">Belongs to the HSP33 family.</text>
</comment>
<gene>
    <name evidence="1" type="primary">hslO</name>
    <name type="ordered locus">AM1_4974</name>
</gene>
<evidence type="ECO:0000255" key="1">
    <source>
        <dbReference type="HAMAP-Rule" id="MF_00117"/>
    </source>
</evidence>
<keyword id="KW-0143">Chaperone</keyword>
<keyword id="KW-0963">Cytoplasm</keyword>
<keyword id="KW-1015">Disulfide bond</keyword>
<keyword id="KW-0676">Redox-active center</keyword>
<keyword id="KW-1185">Reference proteome</keyword>
<keyword id="KW-0862">Zinc</keyword>
<organism>
    <name type="scientific">Acaryochloris marina (strain MBIC 11017)</name>
    <dbReference type="NCBI Taxonomy" id="329726"/>
    <lineage>
        <taxon>Bacteria</taxon>
        <taxon>Bacillati</taxon>
        <taxon>Cyanobacteriota</taxon>
        <taxon>Cyanophyceae</taxon>
        <taxon>Acaryochloridales</taxon>
        <taxon>Acaryochloridaceae</taxon>
        <taxon>Acaryochloris</taxon>
    </lineage>
</organism>